<feature type="chain" id="PRO_0000380994" description="Putative 8-amino-7-oxononanoate synthase">
    <location>
        <begin position="1"/>
        <end position="390"/>
    </location>
</feature>
<feature type="binding site" evidence="1">
    <location>
        <position position="19"/>
    </location>
    <ligand>
        <name>substrate</name>
    </ligand>
</feature>
<feature type="binding site" evidence="1">
    <location>
        <begin position="105"/>
        <end position="106"/>
    </location>
    <ligand>
        <name>pyridoxal 5'-phosphate</name>
        <dbReference type="ChEBI" id="CHEBI:597326"/>
    </ligand>
</feature>
<feature type="binding site" evidence="1">
    <location>
        <position position="130"/>
    </location>
    <ligand>
        <name>substrate</name>
    </ligand>
</feature>
<feature type="binding site" evidence="1">
    <location>
        <position position="177"/>
    </location>
    <ligand>
        <name>pyridoxal 5'-phosphate</name>
        <dbReference type="ChEBI" id="CHEBI:597326"/>
    </ligand>
</feature>
<feature type="binding site" evidence="1">
    <location>
        <begin position="202"/>
        <end position="205"/>
    </location>
    <ligand>
        <name>pyridoxal 5'-phosphate</name>
        <dbReference type="ChEBI" id="CHEBI:597326"/>
    </ligand>
</feature>
<feature type="binding site" evidence="1">
    <location>
        <begin position="234"/>
        <end position="237"/>
    </location>
    <ligand>
        <name>pyridoxal 5'-phosphate</name>
        <dbReference type="ChEBI" id="CHEBI:597326"/>
    </ligand>
</feature>
<feature type="binding site" evidence="1">
    <location>
        <position position="351"/>
    </location>
    <ligand>
        <name>substrate</name>
    </ligand>
</feature>
<feature type="modified residue" description="N6-(pyridoxal phosphate)lysine" evidence="1">
    <location>
        <position position="237"/>
    </location>
</feature>
<proteinExistence type="inferred from homology"/>
<accession>Q5KY23</accession>
<protein>
    <recommendedName>
        <fullName>Putative 8-amino-7-oxononanoate synthase</fullName>
        <shortName>AONS</shortName>
        <ecNumber>2.3.1.47</ecNumber>
    </recommendedName>
    <alternativeName>
        <fullName>7-keto-8-amino-pelargonic acid synthase</fullName>
        <shortName>7-KAP synthase</shortName>
    </alternativeName>
    <alternativeName>
        <fullName>8-amino-7-ketopelargonate synthase</fullName>
    </alternativeName>
</protein>
<gene>
    <name type="primary">bioF</name>
    <name type="ordered locus">GK2128</name>
</gene>
<evidence type="ECO:0000250" key="1"/>
<evidence type="ECO:0000305" key="2"/>
<keyword id="KW-0093">Biotin biosynthesis</keyword>
<keyword id="KW-0663">Pyridoxal phosphate</keyword>
<keyword id="KW-1185">Reference proteome</keyword>
<keyword id="KW-0808">Transferase</keyword>
<sequence length="390" mass="42524">MKTELTVKLHEWEQKAQKRQLRRAEASGATVILNGKPMLNLASNNYLGLADDRRLIEAGCEAMRAYGAGAGASRLVVGNHPLYERAEAALKQWKKAEAALIFNSGYTANIGVLTALIGRDDLVFSDKLNHASLIDGIRLSKAACFRYRHHDIDQLESLLKQSPPAKRKWIVTDAVFSMDGDMAPLEELVELKRRYRAVLLVDEAHSGGVFGPNGEGLLHHFGLEKEEDVIAIGTFSKALGSFGAYVTGEPWLVDYLINSARSLIFTTALPPSVLAANEAAIHIVQAEPKRRERLHALSERFRTKLKRLGFDTGGSETPIVPVIVGPNDRAVAMSEQLQEAGIAAVAIRPPTVPEGTARIRFSITAAMTEEDIDMAVDCIALAGKRIGLIS</sequence>
<reference key="1">
    <citation type="journal article" date="2004" name="Nucleic Acids Res.">
        <title>Thermoadaptation trait revealed by the genome sequence of thermophilic Geobacillus kaustophilus.</title>
        <authorList>
            <person name="Takami H."/>
            <person name="Takaki Y."/>
            <person name="Chee G.-J."/>
            <person name="Nishi S."/>
            <person name="Shimamura S."/>
            <person name="Suzuki H."/>
            <person name="Matsui S."/>
            <person name="Uchiyama I."/>
        </authorList>
    </citation>
    <scope>NUCLEOTIDE SEQUENCE [LARGE SCALE GENOMIC DNA]</scope>
    <source>
        <strain>HTA426</strain>
    </source>
</reference>
<name>BIOF_GEOKA</name>
<organism>
    <name type="scientific">Geobacillus kaustophilus (strain HTA426)</name>
    <dbReference type="NCBI Taxonomy" id="235909"/>
    <lineage>
        <taxon>Bacteria</taxon>
        <taxon>Bacillati</taxon>
        <taxon>Bacillota</taxon>
        <taxon>Bacilli</taxon>
        <taxon>Bacillales</taxon>
        <taxon>Anoxybacillaceae</taxon>
        <taxon>Geobacillus</taxon>
        <taxon>Geobacillus thermoleovorans group</taxon>
    </lineage>
</organism>
<dbReference type="EC" id="2.3.1.47"/>
<dbReference type="EMBL" id="BA000043">
    <property type="protein sequence ID" value="BAD76413.1"/>
    <property type="molecule type" value="Genomic_DNA"/>
</dbReference>
<dbReference type="RefSeq" id="WP_011231613.1">
    <property type="nucleotide sequence ID" value="NC_006510.1"/>
</dbReference>
<dbReference type="SMR" id="Q5KY23"/>
<dbReference type="STRING" id="235909.GK2128"/>
<dbReference type="GeneID" id="32063979"/>
<dbReference type="KEGG" id="gka:GK2128"/>
<dbReference type="eggNOG" id="COG0156">
    <property type="taxonomic scope" value="Bacteria"/>
</dbReference>
<dbReference type="HOGENOM" id="CLU_015846_11_2_9"/>
<dbReference type="UniPathway" id="UPA00078"/>
<dbReference type="Proteomes" id="UP000001172">
    <property type="component" value="Chromosome"/>
</dbReference>
<dbReference type="GO" id="GO:0008710">
    <property type="term" value="F:8-amino-7-oxononanoate synthase activity"/>
    <property type="evidence" value="ECO:0007669"/>
    <property type="project" value="UniProtKB-EC"/>
</dbReference>
<dbReference type="GO" id="GO:0030170">
    <property type="term" value="F:pyridoxal phosphate binding"/>
    <property type="evidence" value="ECO:0007669"/>
    <property type="project" value="InterPro"/>
</dbReference>
<dbReference type="GO" id="GO:0009102">
    <property type="term" value="P:biotin biosynthetic process"/>
    <property type="evidence" value="ECO:0007669"/>
    <property type="project" value="UniProtKB-UniPathway"/>
</dbReference>
<dbReference type="CDD" id="cd06454">
    <property type="entry name" value="KBL_like"/>
    <property type="match status" value="1"/>
</dbReference>
<dbReference type="Gene3D" id="3.90.1150.10">
    <property type="entry name" value="Aspartate Aminotransferase, domain 1"/>
    <property type="match status" value="1"/>
</dbReference>
<dbReference type="Gene3D" id="3.40.640.10">
    <property type="entry name" value="Type I PLP-dependent aspartate aminotransferase-like (Major domain)"/>
    <property type="match status" value="1"/>
</dbReference>
<dbReference type="InterPro" id="IPR001917">
    <property type="entry name" value="Aminotrans_II_pyridoxalP_BS"/>
</dbReference>
<dbReference type="InterPro" id="IPR004839">
    <property type="entry name" value="Aminotransferase_I/II_large"/>
</dbReference>
<dbReference type="InterPro" id="IPR050087">
    <property type="entry name" value="AON_synthase_class-II"/>
</dbReference>
<dbReference type="InterPro" id="IPR004723">
    <property type="entry name" value="AONS_Archaea/Proteobacteria"/>
</dbReference>
<dbReference type="InterPro" id="IPR015424">
    <property type="entry name" value="PyrdxlP-dep_Trfase"/>
</dbReference>
<dbReference type="InterPro" id="IPR015421">
    <property type="entry name" value="PyrdxlP-dep_Trfase_major"/>
</dbReference>
<dbReference type="InterPro" id="IPR015422">
    <property type="entry name" value="PyrdxlP-dep_Trfase_small"/>
</dbReference>
<dbReference type="NCBIfam" id="TIGR00858">
    <property type="entry name" value="bioF"/>
    <property type="match status" value="1"/>
</dbReference>
<dbReference type="PANTHER" id="PTHR13693:SF100">
    <property type="entry name" value="8-AMINO-7-OXONONANOATE SYNTHASE"/>
    <property type="match status" value="1"/>
</dbReference>
<dbReference type="PANTHER" id="PTHR13693">
    <property type="entry name" value="CLASS II AMINOTRANSFERASE/8-AMINO-7-OXONONANOATE SYNTHASE"/>
    <property type="match status" value="1"/>
</dbReference>
<dbReference type="Pfam" id="PF00155">
    <property type="entry name" value="Aminotran_1_2"/>
    <property type="match status" value="1"/>
</dbReference>
<dbReference type="SUPFAM" id="SSF53383">
    <property type="entry name" value="PLP-dependent transferases"/>
    <property type="match status" value="1"/>
</dbReference>
<dbReference type="PROSITE" id="PS00599">
    <property type="entry name" value="AA_TRANSFER_CLASS_2"/>
    <property type="match status" value="1"/>
</dbReference>
<comment type="function">
    <text evidence="1">Catalyzes the decarboxylative condensation of pimeloyl-[acyl-carrier protein] and L-alanine to produce 8-amino-7-oxononanoate (AON), [acyl-carrier protein], and carbon dioxide.</text>
</comment>
<comment type="catalytic activity">
    <reaction>
        <text>6-carboxyhexanoyl-[ACP] + L-alanine + H(+) = (8S)-8-amino-7-oxononanoate + holo-[ACP] + CO2</text>
        <dbReference type="Rhea" id="RHEA:42288"/>
        <dbReference type="Rhea" id="RHEA-COMP:9685"/>
        <dbReference type="Rhea" id="RHEA-COMP:9955"/>
        <dbReference type="ChEBI" id="CHEBI:15378"/>
        <dbReference type="ChEBI" id="CHEBI:16526"/>
        <dbReference type="ChEBI" id="CHEBI:57972"/>
        <dbReference type="ChEBI" id="CHEBI:64479"/>
        <dbReference type="ChEBI" id="CHEBI:78846"/>
        <dbReference type="ChEBI" id="CHEBI:149468"/>
        <dbReference type="EC" id="2.3.1.47"/>
    </reaction>
</comment>
<comment type="cofactor">
    <cofactor evidence="1">
        <name>pyridoxal 5'-phosphate</name>
        <dbReference type="ChEBI" id="CHEBI:597326"/>
    </cofactor>
</comment>
<comment type="pathway">
    <text>Cofactor biosynthesis; biotin biosynthesis.</text>
</comment>
<comment type="subunit">
    <text evidence="1">Homodimer.</text>
</comment>
<comment type="similarity">
    <text evidence="2">Belongs to the class-II pyridoxal-phosphate-dependent aminotransferase family. BioF subfamily.</text>
</comment>